<reference key="1">
    <citation type="journal article" date="2002" name="Nature">
        <title>The genome sequence of Schizosaccharomyces pombe.</title>
        <authorList>
            <person name="Wood V."/>
            <person name="Gwilliam R."/>
            <person name="Rajandream M.A."/>
            <person name="Lyne M.H."/>
            <person name="Lyne R."/>
            <person name="Stewart A."/>
            <person name="Sgouros J.G."/>
            <person name="Peat N."/>
            <person name="Hayles J."/>
            <person name="Baker S.G."/>
            <person name="Basham D."/>
            <person name="Bowman S."/>
            <person name="Brooks K."/>
            <person name="Brown D."/>
            <person name="Brown S."/>
            <person name="Chillingworth T."/>
            <person name="Churcher C.M."/>
            <person name="Collins M."/>
            <person name="Connor R."/>
            <person name="Cronin A."/>
            <person name="Davis P."/>
            <person name="Feltwell T."/>
            <person name="Fraser A."/>
            <person name="Gentles S."/>
            <person name="Goble A."/>
            <person name="Hamlin N."/>
            <person name="Harris D.E."/>
            <person name="Hidalgo J."/>
            <person name="Hodgson G."/>
            <person name="Holroyd S."/>
            <person name="Hornsby T."/>
            <person name="Howarth S."/>
            <person name="Huckle E.J."/>
            <person name="Hunt S."/>
            <person name="Jagels K."/>
            <person name="James K.D."/>
            <person name="Jones L."/>
            <person name="Jones M."/>
            <person name="Leather S."/>
            <person name="McDonald S."/>
            <person name="McLean J."/>
            <person name="Mooney P."/>
            <person name="Moule S."/>
            <person name="Mungall K.L."/>
            <person name="Murphy L.D."/>
            <person name="Niblett D."/>
            <person name="Odell C."/>
            <person name="Oliver K."/>
            <person name="O'Neil S."/>
            <person name="Pearson D."/>
            <person name="Quail M.A."/>
            <person name="Rabbinowitsch E."/>
            <person name="Rutherford K.M."/>
            <person name="Rutter S."/>
            <person name="Saunders D."/>
            <person name="Seeger K."/>
            <person name="Sharp S."/>
            <person name="Skelton J."/>
            <person name="Simmonds M.N."/>
            <person name="Squares R."/>
            <person name="Squares S."/>
            <person name="Stevens K."/>
            <person name="Taylor K."/>
            <person name="Taylor R.G."/>
            <person name="Tivey A."/>
            <person name="Walsh S.V."/>
            <person name="Warren T."/>
            <person name="Whitehead S."/>
            <person name="Woodward J.R."/>
            <person name="Volckaert G."/>
            <person name="Aert R."/>
            <person name="Robben J."/>
            <person name="Grymonprez B."/>
            <person name="Weltjens I."/>
            <person name="Vanstreels E."/>
            <person name="Rieger M."/>
            <person name="Schaefer M."/>
            <person name="Mueller-Auer S."/>
            <person name="Gabel C."/>
            <person name="Fuchs M."/>
            <person name="Duesterhoeft A."/>
            <person name="Fritzc C."/>
            <person name="Holzer E."/>
            <person name="Moestl D."/>
            <person name="Hilbert H."/>
            <person name="Borzym K."/>
            <person name="Langer I."/>
            <person name="Beck A."/>
            <person name="Lehrach H."/>
            <person name="Reinhardt R."/>
            <person name="Pohl T.M."/>
            <person name="Eger P."/>
            <person name="Zimmermann W."/>
            <person name="Wedler H."/>
            <person name="Wambutt R."/>
            <person name="Purnelle B."/>
            <person name="Goffeau A."/>
            <person name="Cadieu E."/>
            <person name="Dreano S."/>
            <person name="Gloux S."/>
            <person name="Lelaure V."/>
            <person name="Mottier S."/>
            <person name="Galibert F."/>
            <person name="Aves S.J."/>
            <person name="Xiang Z."/>
            <person name="Hunt C."/>
            <person name="Moore K."/>
            <person name="Hurst S.M."/>
            <person name="Lucas M."/>
            <person name="Rochet M."/>
            <person name="Gaillardin C."/>
            <person name="Tallada V.A."/>
            <person name="Garzon A."/>
            <person name="Thode G."/>
            <person name="Daga R.R."/>
            <person name="Cruzado L."/>
            <person name="Jimenez J."/>
            <person name="Sanchez M."/>
            <person name="del Rey F."/>
            <person name="Benito J."/>
            <person name="Dominguez A."/>
            <person name="Revuelta J.L."/>
            <person name="Moreno S."/>
            <person name="Armstrong J."/>
            <person name="Forsburg S.L."/>
            <person name="Cerutti L."/>
            <person name="Lowe T."/>
            <person name="McCombie W.R."/>
            <person name="Paulsen I."/>
            <person name="Potashkin J."/>
            <person name="Shpakovski G.V."/>
            <person name="Ussery D."/>
            <person name="Barrell B.G."/>
            <person name="Nurse P."/>
        </authorList>
    </citation>
    <scope>NUCLEOTIDE SEQUENCE [LARGE SCALE GENOMIC DNA]</scope>
    <source>
        <strain>972 / ATCC 24843</strain>
    </source>
</reference>
<reference key="2">
    <citation type="journal article" date="2001" name="Nucleic Acids Res.">
        <title>Comprehensive isolation of meiosis-specific genes identifies novel proteins and unusual non-coding transcripts in Schizosaccharomyces pombe.</title>
        <authorList>
            <person name="Watanabe T."/>
            <person name="Miyashita K."/>
            <person name="Saito T.T."/>
            <person name="Yoneki T."/>
            <person name="Kakihara Y."/>
            <person name="Nabeshima K."/>
            <person name="Kishi Y.A."/>
            <person name="Shimoda C."/>
            <person name="Nojima H."/>
        </authorList>
    </citation>
    <scope>NUCLEOTIDE SEQUENCE [MRNA] OF 236-264</scope>
    <source>
        <strain>CD16-1</strain>
    </source>
</reference>
<reference key="3">
    <citation type="journal article" date="2019" name="Mol. Biol. Evol.">
        <title>Killer meiotic drive and dynamic evolution of the wtf gene family.</title>
        <authorList>
            <person name="Eickbush M.T."/>
            <person name="Young J.M."/>
            <person name="Zanders S.E."/>
        </authorList>
    </citation>
    <scope>LACK OF ALTERNATIVE SPLICING</scope>
</reference>
<reference key="4">
    <citation type="journal article" date="2020" name="PLoS Genet.">
        <title>Dramatically diverse Schizosaccharomyces pombe wtf meiotic drivers all display high gamete-killing efficiency.</title>
        <authorList>
            <person name="Bravo Nunez M.A."/>
            <person name="Sabbarini I.M."/>
            <person name="Eickbush M.T."/>
            <person name="Liang Y."/>
            <person name="Lange J.J."/>
            <person name="Kent A.M."/>
            <person name="Zanders S.E."/>
        </authorList>
    </citation>
    <scope>DEVELOPMENTAL STAGE</scope>
    <scope>DISRUPTION PHENOTYPE</scope>
</reference>
<sequence>MNSNYVPLTSSVDVEEKMESENGVDLGNDIDLEKGLPLKYNSENESGLPSNSASSYLINPDPTMDLEAQTFNHNESTTSVGHDNSNSPPKCRKTCSSNKVYSNEVPLLFVFVISISIVCIFDLVIFGCLQYNMVSMDDLHVMQRLSWFCASLALLFILMRYYDFWTKACKDGIKHIFKKWKNTPLAFLQVLIFNIIGFFVRKGLKDSFGEQWGLKTSLFAHVSFATMSIFIFIFETLKPGSCSVDWIARILKAVVYFLEDSDEL</sequence>
<evidence type="ECO:0000250" key="1">
    <source>
        <dbReference type="UniProtKB" id="A0A218N034"/>
    </source>
</evidence>
<evidence type="ECO:0000255" key="2"/>
<evidence type="ECO:0000256" key="3">
    <source>
        <dbReference type="SAM" id="MobiDB-lite"/>
    </source>
</evidence>
<evidence type="ECO:0000269" key="4">
    <source>
    </source>
</evidence>
<evidence type="ECO:0000305" key="5"/>
<evidence type="ECO:0000305" key="6">
    <source>
    </source>
</evidence>
<evidence type="ECO:0000312" key="7">
    <source>
        <dbReference type="PomBase" id="SPCC1281.08"/>
    </source>
</evidence>
<protein>
    <recommendedName>
        <fullName evidence="7">Wtf element wtf11</fullName>
    </recommendedName>
</protein>
<proteinExistence type="evidence at protein level"/>
<feature type="chain" id="PRO_0000193220" description="Wtf element wtf11">
    <location>
        <begin position="1"/>
        <end position="264"/>
    </location>
</feature>
<feature type="transmembrane region" description="Helical" evidence="2">
    <location>
        <begin position="107"/>
        <end position="127"/>
    </location>
</feature>
<feature type="transmembrane region" description="Helical" evidence="2">
    <location>
        <begin position="145"/>
        <end position="165"/>
    </location>
</feature>
<feature type="transmembrane region" description="Helical" evidence="2">
    <location>
        <begin position="180"/>
        <end position="200"/>
    </location>
</feature>
<feature type="transmembrane region" description="Helical" evidence="2">
    <location>
        <begin position="217"/>
        <end position="237"/>
    </location>
</feature>
<feature type="region of interest" description="Disordered" evidence="3">
    <location>
        <begin position="1"/>
        <end position="26"/>
    </location>
</feature>
<feature type="compositionally biased region" description="Polar residues" evidence="3">
    <location>
        <begin position="1"/>
        <end position="12"/>
    </location>
</feature>
<gene>
    <name evidence="7" type="primary">wtf11</name>
    <name type="synonym">meu24</name>
    <name evidence="7" type="ORF">SPCC1281.08</name>
</gene>
<organism>
    <name type="scientific">Schizosaccharomyces pombe (strain 972 / ATCC 24843)</name>
    <name type="common">Fission yeast</name>
    <dbReference type="NCBI Taxonomy" id="284812"/>
    <lineage>
        <taxon>Eukaryota</taxon>
        <taxon>Fungi</taxon>
        <taxon>Dikarya</taxon>
        <taxon>Ascomycota</taxon>
        <taxon>Taphrinomycotina</taxon>
        <taxon>Schizosaccharomycetes</taxon>
        <taxon>Schizosaccharomycetales</taxon>
        <taxon>Schizosaccharomycetaceae</taxon>
        <taxon>Schizosaccharomyces</taxon>
    </lineage>
</organism>
<name>WTF11_SCHPO</name>
<accession>Q96WS1</accession>
<keyword id="KW-0469">Meiosis</keyword>
<keyword id="KW-0472">Membrane</keyword>
<keyword id="KW-1185">Reference proteome</keyword>
<keyword id="KW-0812">Transmembrane</keyword>
<keyword id="KW-1133">Transmembrane helix</keyword>
<dbReference type="EMBL" id="CU329672">
    <property type="protein sequence ID" value="CAA22829.1"/>
    <property type="molecule type" value="Genomic_DNA"/>
</dbReference>
<dbReference type="EMBL" id="AB054308">
    <property type="protein sequence ID" value="BAB60875.1"/>
    <property type="molecule type" value="mRNA"/>
</dbReference>
<dbReference type="PIR" id="T40927">
    <property type="entry name" value="T40927"/>
</dbReference>
<dbReference type="RefSeq" id="NP_588172.1">
    <property type="nucleotide sequence ID" value="NM_001023161.2"/>
</dbReference>
<dbReference type="BioGRID" id="275738">
    <property type="interactions" value="10"/>
</dbReference>
<dbReference type="STRING" id="284812.Q96WS1"/>
<dbReference type="PaxDb" id="4896-SPCC1281.08.1"/>
<dbReference type="EnsemblFungi" id="SPCC1281.08.1">
    <property type="protein sequence ID" value="SPCC1281.08.1:pep"/>
    <property type="gene ID" value="SPCC1281.08"/>
</dbReference>
<dbReference type="GeneID" id="2539167"/>
<dbReference type="KEGG" id="spo:2539167"/>
<dbReference type="PomBase" id="SPCC1281.08">
    <property type="gene designation" value="wtf11"/>
</dbReference>
<dbReference type="VEuPathDB" id="FungiDB:SPCC1281.08"/>
<dbReference type="HOGENOM" id="CLU_092895_0_0_1"/>
<dbReference type="InParanoid" id="Q96WS1"/>
<dbReference type="PhylomeDB" id="Q96WS1"/>
<dbReference type="PRO" id="PR:Q96WS1"/>
<dbReference type="Proteomes" id="UP000002485">
    <property type="component" value="Chromosome III"/>
</dbReference>
<dbReference type="GO" id="GO:0005737">
    <property type="term" value="C:cytoplasm"/>
    <property type="evidence" value="ECO:0007005"/>
    <property type="project" value="PomBase"/>
</dbReference>
<dbReference type="GO" id="GO:0005794">
    <property type="term" value="C:Golgi apparatus"/>
    <property type="evidence" value="ECO:0007005"/>
    <property type="project" value="PomBase"/>
</dbReference>
<dbReference type="GO" id="GO:0016020">
    <property type="term" value="C:membrane"/>
    <property type="evidence" value="ECO:0007669"/>
    <property type="project" value="UniProtKB-SubCell"/>
</dbReference>
<dbReference type="GO" id="GO:0051321">
    <property type="term" value="P:meiotic cell cycle"/>
    <property type="evidence" value="ECO:0007669"/>
    <property type="project" value="UniProtKB-KW"/>
</dbReference>
<dbReference type="GO" id="GO:0110134">
    <property type="term" value="P:meiotic drive"/>
    <property type="evidence" value="ECO:0000255"/>
    <property type="project" value="PomBase"/>
</dbReference>
<dbReference type="InterPro" id="IPR004982">
    <property type="entry name" value="WTF"/>
</dbReference>
<dbReference type="Pfam" id="PF03303">
    <property type="entry name" value="WTF"/>
    <property type="match status" value="1"/>
</dbReference>
<dbReference type="PROSITE" id="PS00014">
    <property type="entry name" value="ER_TARGET"/>
    <property type="match status" value="1"/>
</dbReference>
<comment type="function">
    <text evidence="1">May act in meiotic drive.</text>
</comment>
<comment type="subcellular location">
    <subcellularLocation>
        <location evidence="2">Membrane</location>
        <topology evidence="2">Multi-pass membrane protein</topology>
    </subcellularLocation>
</comment>
<comment type="developmental stage">
    <text evidence="4">Present following meiosis I (at protein level).</text>
</comment>
<comment type="disruption phenotype">
    <text evidence="4">Normal vegetative cell population growth (PubMed:32032353). Simultaneous knockout of wtf15, wtf14 and wtf7 results in normal spore viability (PubMed:32032353).</text>
</comment>
<comment type="miscellaneous">
    <text evidence="6">Although the gene is capable of encoding two isoforms, RNA sequencing data show no evidence of alternative transcripts.</text>
</comment>
<comment type="similarity">
    <text evidence="5">Belongs to the WTF family.</text>
</comment>